<comment type="function">
    <text evidence="1">One of two assembly initiator proteins, it binds directly to the 5'-end of the 23S rRNA, where it nucleates assembly of the 50S subunit.</text>
</comment>
<comment type="function">
    <text evidence="1">Located at the polypeptide exit tunnel on the outside of the subunit.</text>
</comment>
<comment type="subunit">
    <text evidence="1">Part of the 50S ribosomal subunit.</text>
</comment>
<comment type="similarity">
    <text evidence="1">Belongs to the universal ribosomal protein uL24 family.</text>
</comment>
<protein>
    <recommendedName>
        <fullName evidence="1">Large ribosomal subunit protein uL24</fullName>
    </recommendedName>
    <alternativeName>
        <fullName evidence="2">50S ribosomal protein L24</fullName>
    </alternativeName>
</protein>
<dbReference type="EMBL" id="CP000968">
    <property type="protein sequence ID" value="ACB08306.1"/>
    <property type="molecule type" value="Genomic_DNA"/>
</dbReference>
<dbReference type="RefSeq" id="WP_012310203.1">
    <property type="nucleotide sequence ID" value="NC_010482.1"/>
</dbReference>
<dbReference type="SMR" id="B1L777"/>
<dbReference type="FunCoup" id="B1L777">
    <property type="interactions" value="189"/>
</dbReference>
<dbReference type="STRING" id="374847.Kcr_1561"/>
<dbReference type="EnsemblBacteria" id="ACB08306">
    <property type="protein sequence ID" value="ACB08306"/>
    <property type="gene ID" value="Kcr_1561"/>
</dbReference>
<dbReference type="GeneID" id="6094837"/>
<dbReference type="KEGG" id="kcr:Kcr_1561"/>
<dbReference type="eggNOG" id="arCOG04094">
    <property type="taxonomic scope" value="Archaea"/>
</dbReference>
<dbReference type="HOGENOM" id="CLU_093240_2_1_2"/>
<dbReference type="InParanoid" id="B1L777"/>
<dbReference type="OrthoDB" id="10899at2157"/>
<dbReference type="PhylomeDB" id="B1L777"/>
<dbReference type="Proteomes" id="UP000001686">
    <property type="component" value="Chromosome"/>
</dbReference>
<dbReference type="GO" id="GO:0022625">
    <property type="term" value="C:cytosolic large ribosomal subunit"/>
    <property type="evidence" value="ECO:0000318"/>
    <property type="project" value="GO_Central"/>
</dbReference>
<dbReference type="GO" id="GO:0003723">
    <property type="term" value="F:RNA binding"/>
    <property type="evidence" value="ECO:0000318"/>
    <property type="project" value="GO_Central"/>
</dbReference>
<dbReference type="GO" id="GO:0019843">
    <property type="term" value="F:rRNA binding"/>
    <property type="evidence" value="ECO:0007669"/>
    <property type="project" value="UniProtKB-UniRule"/>
</dbReference>
<dbReference type="GO" id="GO:0003735">
    <property type="term" value="F:structural constituent of ribosome"/>
    <property type="evidence" value="ECO:0000318"/>
    <property type="project" value="GO_Central"/>
</dbReference>
<dbReference type="GO" id="GO:0002181">
    <property type="term" value="P:cytoplasmic translation"/>
    <property type="evidence" value="ECO:0000318"/>
    <property type="project" value="GO_Central"/>
</dbReference>
<dbReference type="GO" id="GO:0042273">
    <property type="term" value="P:ribosomal large subunit biogenesis"/>
    <property type="evidence" value="ECO:0000318"/>
    <property type="project" value="GO_Central"/>
</dbReference>
<dbReference type="CDD" id="cd06089">
    <property type="entry name" value="KOW_RPL26"/>
    <property type="match status" value="1"/>
</dbReference>
<dbReference type="FunFam" id="2.30.30.30:FF:000009">
    <property type="entry name" value="60S ribosomal protein L26"/>
    <property type="match status" value="1"/>
</dbReference>
<dbReference type="Gene3D" id="2.30.30.30">
    <property type="match status" value="1"/>
</dbReference>
<dbReference type="HAMAP" id="MF_01326_A">
    <property type="entry name" value="Ribosomal_uL24_A"/>
    <property type="match status" value="1"/>
</dbReference>
<dbReference type="InterPro" id="IPR005824">
    <property type="entry name" value="KOW"/>
</dbReference>
<dbReference type="InterPro" id="IPR014722">
    <property type="entry name" value="Rib_uL2_dom2"/>
</dbReference>
<dbReference type="InterPro" id="IPR005825">
    <property type="entry name" value="Ribosomal_uL24_CS"/>
</dbReference>
<dbReference type="InterPro" id="IPR005756">
    <property type="entry name" value="Ribosomal_uL24_euk/arc"/>
</dbReference>
<dbReference type="InterPro" id="IPR041988">
    <property type="entry name" value="Ribosomal_uL24_KOW"/>
</dbReference>
<dbReference type="InterPro" id="IPR008991">
    <property type="entry name" value="Translation_prot_SH3-like_sf"/>
</dbReference>
<dbReference type="NCBIfam" id="TIGR01080">
    <property type="entry name" value="rplX_A_E"/>
    <property type="match status" value="1"/>
</dbReference>
<dbReference type="PANTHER" id="PTHR11143">
    <property type="entry name" value="60S RIBOSOMAL PROTEIN L26 FAMILY MEMBER"/>
    <property type="match status" value="1"/>
</dbReference>
<dbReference type="Pfam" id="PF00467">
    <property type="entry name" value="KOW"/>
    <property type="match status" value="1"/>
</dbReference>
<dbReference type="Pfam" id="PF16906">
    <property type="entry name" value="Ribosomal_L26"/>
    <property type="match status" value="1"/>
</dbReference>
<dbReference type="SMART" id="SM00739">
    <property type="entry name" value="KOW"/>
    <property type="match status" value="1"/>
</dbReference>
<dbReference type="SUPFAM" id="SSF50104">
    <property type="entry name" value="Translation proteins SH3-like domain"/>
    <property type="match status" value="1"/>
</dbReference>
<dbReference type="PROSITE" id="PS01108">
    <property type="entry name" value="RIBOSOMAL_L24"/>
    <property type="match status" value="1"/>
</dbReference>
<keyword id="KW-1185">Reference proteome</keyword>
<keyword id="KW-0687">Ribonucleoprotein</keyword>
<keyword id="KW-0689">Ribosomal protein</keyword>
<keyword id="KW-0694">RNA-binding</keyword>
<keyword id="KW-0699">rRNA-binding</keyword>
<name>RL24_KORCO</name>
<evidence type="ECO:0000255" key="1">
    <source>
        <dbReference type="HAMAP-Rule" id="MF_01326"/>
    </source>
</evidence>
<evidence type="ECO:0000305" key="2"/>
<feature type="chain" id="PRO_0000355734" description="Large ribosomal subunit protein uL24">
    <location>
        <begin position="1"/>
        <end position="131"/>
    </location>
</feature>
<organism>
    <name type="scientific">Korarchaeum cryptofilum (strain OPF8)</name>
    <dbReference type="NCBI Taxonomy" id="374847"/>
    <lineage>
        <taxon>Archaea</taxon>
        <taxon>Thermoproteota</taxon>
        <taxon>Candidatus Korarchaeia</taxon>
        <taxon>Candidatus Korarchaeales</taxon>
        <taxon>Candidatus Korarchaeaceae</taxon>
        <taxon>Candidatus Korarchaeum</taxon>
    </lineage>
</organism>
<accession>B1L777</accession>
<gene>
    <name evidence="1" type="primary">rpl24</name>
    <name type="ordered locus">Kcr_1561</name>
</gene>
<sequence>MQVKSHKPSKQRKYLYNAPIHHRGKIMSAPLSEELKSKYGINSIPIRKGDRVKVMRGDYRGTEGEVISVDRKRYRIAVKGIVRRKADGTEVPVPIHPSKVVITKLYLKDEARKRLLERKGVKVEEIVEESE</sequence>
<reference key="1">
    <citation type="journal article" date="2008" name="Proc. Natl. Acad. Sci. U.S.A.">
        <title>A korarchaeal genome reveals new insights into the evolution of the Archaea.</title>
        <authorList>
            <person name="Elkins J.G."/>
            <person name="Podar M."/>
            <person name="Graham D.E."/>
            <person name="Makarova K.S."/>
            <person name="Wolf Y."/>
            <person name="Randau L."/>
            <person name="Hedlund B.P."/>
            <person name="Brochier-Armanet C."/>
            <person name="Kunin V."/>
            <person name="Anderson I."/>
            <person name="Lapidus A."/>
            <person name="Goltsman E."/>
            <person name="Barry K."/>
            <person name="Koonin E.V."/>
            <person name="Hugenholtz P."/>
            <person name="Kyrpides N."/>
            <person name="Wanner G."/>
            <person name="Richardson P."/>
            <person name="Keller M."/>
            <person name="Stetter K.O."/>
        </authorList>
    </citation>
    <scope>NUCLEOTIDE SEQUENCE [LARGE SCALE GENOMIC DNA]</scope>
    <source>
        <strain>OPF8</strain>
    </source>
</reference>
<proteinExistence type="inferred from homology"/>